<evidence type="ECO:0000255" key="1">
    <source>
        <dbReference type="PROSITE-ProRule" id="PRU01182"/>
    </source>
</evidence>
<evidence type="ECO:0000305" key="2"/>
<name>Y1834_PSYA2</name>
<keyword id="KW-0378">Hydrolase</keyword>
<keyword id="KW-0479">Metal-binding</keyword>
<keyword id="KW-0482">Metalloprotease</keyword>
<keyword id="KW-0645">Protease</keyword>
<keyword id="KW-1185">Reference proteome</keyword>
<keyword id="KW-0862">Zinc</keyword>
<reference key="1">
    <citation type="journal article" date="2010" name="Appl. Environ. Microbiol.">
        <title>The genome sequence of Psychrobacter arcticus 273-4, a psychroactive Siberian permafrost bacterium, reveals mechanisms for adaptation to low-temperature growth.</title>
        <authorList>
            <person name="Ayala-del-Rio H.L."/>
            <person name="Chain P.S."/>
            <person name="Grzymski J.J."/>
            <person name="Ponder M.A."/>
            <person name="Ivanova N."/>
            <person name="Bergholz P.W."/>
            <person name="Di Bartolo G."/>
            <person name="Hauser L."/>
            <person name="Land M."/>
            <person name="Bakermans C."/>
            <person name="Rodrigues D."/>
            <person name="Klappenbach J."/>
            <person name="Zarka D."/>
            <person name="Larimer F."/>
            <person name="Richardson P."/>
            <person name="Murray A."/>
            <person name="Thomashow M."/>
            <person name="Tiedje J.M."/>
        </authorList>
    </citation>
    <scope>NUCLEOTIDE SEQUENCE [LARGE SCALE GENOMIC DNA]</scope>
    <source>
        <strain>DSM 17307 / VKM B-2377 / 273-4</strain>
    </source>
</reference>
<sequence length="227" mass="24931">MAIKDWHEDDRPREKLLKFGAAHLSDAEILAIFLRTGTQSQSAIDLARHLIEQFGSLAELLAAPQETVLACHGIGPAKYAQILASLEIGRRYLDSQLKTGQGLGRSQMVKDYISTHLRGEPREVFAVLCLDNALNLINFEILFTGGISSCSVCIKHVLRHALSHATSQLIIAHNHPHTDATPSTADNLLTYELKKACDLIDLSLIDHVIVGRNETLSYAENCLAPFG</sequence>
<feature type="chain" id="PRO_1000089834" description="UPF0758 protein Psyc_1834">
    <location>
        <begin position="1"/>
        <end position="227"/>
    </location>
</feature>
<feature type="domain" description="MPN" evidence="1">
    <location>
        <begin position="102"/>
        <end position="224"/>
    </location>
</feature>
<feature type="short sequence motif" description="JAMM motif" evidence="1">
    <location>
        <begin position="173"/>
        <end position="186"/>
    </location>
</feature>
<feature type="binding site" evidence="1">
    <location>
        <position position="173"/>
    </location>
    <ligand>
        <name>Zn(2+)</name>
        <dbReference type="ChEBI" id="CHEBI:29105"/>
        <note>catalytic</note>
    </ligand>
</feature>
<feature type="binding site" evidence="1">
    <location>
        <position position="175"/>
    </location>
    <ligand>
        <name>Zn(2+)</name>
        <dbReference type="ChEBI" id="CHEBI:29105"/>
        <note>catalytic</note>
    </ligand>
</feature>
<feature type="binding site" evidence="1">
    <location>
        <position position="186"/>
    </location>
    <ligand>
        <name>Zn(2+)</name>
        <dbReference type="ChEBI" id="CHEBI:29105"/>
        <note>catalytic</note>
    </ligand>
</feature>
<proteinExistence type="inferred from homology"/>
<protein>
    <recommendedName>
        <fullName>UPF0758 protein Psyc_1834</fullName>
    </recommendedName>
</protein>
<dbReference type="EMBL" id="CP000082">
    <property type="protein sequence ID" value="AAZ19682.1"/>
    <property type="molecule type" value="Genomic_DNA"/>
</dbReference>
<dbReference type="RefSeq" id="WP_011281093.1">
    <property type="nucleotide sequence ID" value="NC_007204.1"/>
</dbReference>
<dbReference type="SMR" id="Q4FQM6"/>
<dbReference type="STRING" id="259536.Psyc_1834"/>
<dbReference type="KEGG" id="par:Psyc_1834"/>
<dbReference type="eggNOG" id="COG2003">
    <property type="taxonomic scope" value="Bacteria"/>
</dbReference>
<dbReference type="HOGENOM" id="CLU_073529_0_2_6"/>
<dbReference type="OrthoDB" id="9804482at2"/>
<dbReference type="Proteomes" id="UP000000546">
    <property type="component" value="Chromosome"/>
</dbReference>
<dbReference type="GO" id="GO:0046872">
    <property type="term" value="F:metal ion binding"/>
    <property type="evidence" value="ECO:0007669"/>
    <property type="project" value="UniProtKB-KW"/>
</dbReference>
<dbReference type="GO" id="GO:0008237">
    <property type="term" value="F:metallopeptidase activity"/>
    <property type="evidence" value="ECO:0007669"/>
    <property type="project" value="UniProtKB-KW"/>
</dbReference>
<dbReference type="GO" id="GO:0006508">
    <property type="term" value="P:proteolysis"/>
    <property type="evidence" value="ECO:0007669"/>
    <property type="project" value="UniProtKB-KW"/>
</dbReference>
<dbReference type="CDD" id="cd08071">
    <property type="entry name" value="MPN_DUF2466"/>
    <property type="match status" value="1"/>
</dbReference>
<dbReference type="Gene3D" id="1.10.150.20">
    <property type="entry name" value="5' to 3' exonuclease, C-terminal subdomain"/>
    <property type="match status" value="1"/>
</dbReference>
<dbReference type="Gene3D" id="3.40.140.10">
    <property type="entry name" value="Cytidine Deaminase, domain 2"/>
    <property type="match status" value="1"/>
</dbReference>
<dbReference type="InterPro" id="IPR037518">
    <property type="entry name" value="MPN"/>
</dbReference>
<dbReference type="InterPro" id="IPR025657">
    <property type="entry name" value="RadC_JAB"/>
</dbReference>
<dbReference type="InterPro" id="IPR010994">
    <property type="entry name" value="RuvA_2-like"/>
</dbReference>
<dbReference type="InterPro" id="IPR001405">
    <property type="entry name" value="UPF0758"/>
</dbReference>
<dbReference type="InterPro" id="IPR046778">
    <property type="entry name" value="UPF0758_N"/>
</dbReference>
<dbReference type="NCBIfam" id="NF000642">
    <property type="entry name" value="PRK00024.1"/>
    <property type="match status" value="1"/>
</dbReference>
<dbReference type="NCBIfam" id="TIGR00608">
    <property type="entry name" value="radc"/>
    <property type="match status" value="1"/>
</dbReference>
<dbReference type="PANTHER" id="PTHR30471">
    <property type="entry name" value="DNA REPAIR PROTEIN RADC"/>
    <property type="match status" value="1"/>
</dbReference>
<dbReference type="PANTHER" id="PTHR30471:SF3">
    <property type="entry name" value="UPF0758 PROTEIN YEES-RELATED"/>
    <property type="match status" value="1"/>
</dbReference>
<dbReference type="Pfam" id="PF04002">
    <property type="entry name" value="RadC"/>
    <property type="match status" value="1"/>
</dbReference>
<dbReference type="Pfam" id="PF20582">
    <property type="entry name" value="UPF0758_N"/>
    <property type="match status" value="1"/>
</dbReference>
<dbReference type="SUPFAM" id="SSF102712">
    <property type="entry name" value="JAB1/MPN domain"/>
    <property type="match status" value="1"/>
</dbReference>
<dbReference type="SUPFAM" id="SSF47781">
    <property type="entry name" value="RuvA domain 2-like"/>
    <property type="match status" value="1"/>
</dbReference>
<dbReference type="PROSITE" id="PS50249">
    <property type="entry name" value="MPN"/>
    <property type="match status" value="1"/>
</dbReference>
<organism>
    <name type="scientific">Psychrobacter arcticus (strain DSM 17307 / VKM B-2377 / 273-4)</name>
    <dbReference type="NCBI Taxonomy" id="259536"/>
    <lineage>
        <taxon>Bacteria</taxon>
        <taxon>Pseudomonadati</taxon>
        <taxon>Pseudomonadota</taxon>
        <taxon>Gammaproteobacteria</taxon>
        <taxon>Moraxellales</taxon>
        <taxon>Moraxellaceae</taxon>
        <taxon>Psychrobacter</taxon>
    </lineage>
</organism>
<gene>
    <name type="ordered locus">Psyc_1834</name>
</gene>
<accession>Q4FQM6</accession>
<comment type="similarity">
    <text evidence="2">Belongs to the UPF0758 family.</text>
</comment>